<organism>
    <name type="scientific">Arabidopsis thaliana</name>
    <name type="common">Mouse-ear cress</name>
    <dbReference type="NCBI Taxonomy" id="3702"/>
    <lineage>
        <taxon>Eukaryota</taxon>
        <taxon>Viridiplantae</taxon>
        <taxon>Streptophyta</taxon>
        <taxon>Embryophyta</taxon>
        <taxon>Tracheophyta</taxon>
        <taxon>Spermatophyta</taxon>
        <taxon>Magnoliopsida</taxon>
        <taxon>eudicotyledons</taxon>
        <taxon>Gunneridae</taxon>
        <taxon>Pentapetalae</taxon>
        <taxon>rosids</taxon>
        <taxon>malvids</taxon>
        <taxon>Brassicales</taxon>
        <taxon>Brassicaceae</taxon>
        <taxon>Camelineae</taxon>
        <taxon>Arabidopsis</taxon>
    </lineage>
</organism>
<dbReference type="EMBL" id="AC007259">
    <property type="protein sequence ID" value="AAD50004.1"/>
    <property type="molecule type" value="Genomic_DNA"/>
</dbReference>
<dbReference type="EMBL" id="CP002684">
    <property type="protein sequence ID" value="AEE28704.1"/>
    <property type="molecule type" value="Genomic_DNA"/>
</dbReference>
<dbReference type="EMBL" id="DQ056451">
    <property type="protein sequence ID" value="AAY78608.1"/>
    <property type="molecule type" value="mRNA"/>
</dbReference>
<dbReference type="PIR" id="D86246">
    <property type="entry name" value="D86246"/>
</dbReference>
<dbReference type="RefSeq" id="NP_172591.1">
    <property type="nucleotide sequence ID" value="NM_100997.2"/>
</dbReference>
<dbReference type="SMR" id="Q9SXB0"/>
<dbReference type="FunCoup" id="Q9SXB0">
    <property type="interactions" value="549"/>
</dbReference>
<dbReference type="STRING" id="3702.Q9SXB0"/>
<dbReference type="PaxDb" id="3702-AT1G11250.1"/>
<dbReference type="ProteomicsDB" id="226541"/>
<dbReference type="EnsemblPlants" id="AT1G11250.1">
    <property type="protein sequence ID" value="AT1G11250.1"/>
    <property type="gene ID" value="AT1G11250"/>
</dbReference>
<dbReference type="GeneID" id="837666"/>
<dbReference type="Gramene" id="AT1G11250.1">
    <property type="protein sequence ID" value="AT1G11250.1"/>
    <property type="gene ID" value="AT1G11250"/>
</dbReference>
<dbReference type="KEGG" id="ath:AT1G11250"/>
<dbReference type="Araport" id="AT1G11250"/>
<dbReference type="TAIR" id="AT1G11250">
    <property type="gene designation" value="SYP125"/>
</dbReference>
<dbReference type="eggNOG" id="KOG0810">
    <property type="taxonomic scope" value="Eukaryota"/>
</dbReference>
<dbReference type="HOGENOM" id="CLU_042423_1_1_1"/>
<dbReference type="InParanoid" id="Q9SXB0"/>
<dbReference type="OMA" id="HPRNAPQ"/>
<dbReference type="OrthoDB" id="1086973at2759"/>
<dbReference type="PhylomeDB" id="Q9SXB0"/>
<dbReference type="PRO" id="PR:Q9SXB0"/>
<dbReference type="Proteomes" id="UP000006548">
    <property type="component" value="Chromosome 1"/>
</dbReference>
<dbReference type="ExpressionAtlas" id="Q9SXB0">
    <property type="expression patterns" value="baseline and differential"/>
</dbReference>
<dbReference type="GO" id="GO:0016020">
    <property type="term" value="C:membrane"/>
    <property type="evidence" value="ECO:0007669"/>
    <property type="project" value="UniProtKB-SubCell"/>
</dbReference>
<dbReference type="GO" id="GO:0005484">
    <property type="term" value="F:SNAP receptor activity"/>
    <property type="evidence" value="ECO:0007669"/>
    <property type="project" value="InterPro"/>
</dbReference>
<dbReference type="GO" id="GO:0006886">
    <property type="term" value="P:intracellular protein transport"/>
    <property type="evidence" value="ECO:0007669"/>
    <property type="project" value="InterPro"/>
</dbReference>
<dbReference type="GO" id="GO:0016192">
    <property type="term" value="P:vesicle-mediated transport"/>
    <property type="evidence" value="ECO:0007669"/>
    <property type="project" value="InterPro"/>
</dbReference>
<dbReference type="CDD" id="cd15848">
    <property type="entry name" value="SNARE_syntaxin1-like"/>
    <property type="match status" value="1"/>
</dbReference>
<dbReference type="CDD" id="cd00179">
    <property type="entry name" value="SynN"/>
    <property type="match status" value="1"/>
</dbReference>
<dbReference type="FunFam" id="1.20.58.70:FF:000003">
    <property type="entry name" value="Qa-SNARE, Sso1/Syntaxin1-type, SYP12A-group"/>
    <property type="match status" value="1"/>
</dbReference>
<dbReference type="FunFam" id="1.20.5.110:FF:000008">
    <property type="entry name" value="Syntaxin 132"/>
    <property type="match status" value="1"/>
</dbReference>
<dbReference type="Gene3D" id="1.20.5.110">
    <property type="match status" value="1"/>
</dbReference>
<dbReference type="Gene3D" id="1.20.58.70">
    <property type="match status" value="1"/>
</dbReference>
<dbReference type="InterPro" id="IPR010989">
    <property type="entry name" value="SNARE"/>
</dbReference>
<dbReference type="InterPro" id="IPR045242">
    <property type="entry name" value="Syntaxin"/>
</dbReference>
<dbReference type="InterPro" id="IPR006012">
    <property type="entry name" value="Syntaxin/epimorphin_CS"/>
</dbReference>
<dbReference type="InterPro" id="IPR006011">
    <property type="entry name" value="Syntaxin_N"/>
</dbReference>
<dbReference type="InterPro" id="IPR000727">
    <property type="entry name" value="T_SNARE_dom"/>
</dbReference>
<dbReference type="PANTHER" id="PTHR19957">
    <property type="entry name" value="SYNTAXIN"/>
    <property type="match status" value="1"/>
</dbReference>
<dbReference type="PANTHER" id="PTHR19957:SF314">
    <property type="entry name" value="SYNTAXIN-124-RELATED"/>
    <property type="match status" value="1"/>
</dbReference>
<dbReference type="Pfam" id="PF05739">
    <property type="entry name" value="SNARE"/>
    <property type="match status" value="1"/>
</dbReference>
<dbReference type="Pfam" id="PF00804">
    <property type="entry name" value="Syntaxin"/>
    <property type="match status" value="1"/>
</dbReference>
<dbReference type="SMART" id="SM00503">
    <property type="entry name" value="SynN"/>
    <property type="match status" value="1"/>
</dbReference>
<dbReference type="SMART" id="SM00397">
    <property type="entry name" value="t_SNARE"/>
    <property type="match status" value="1"/>
</dbReference>
<dbReference type="SUPFAM" id="SSF47661">
    <property type="entry name" value="t-snare proteins"/>
    <property type="match status" value="1"/>
</dbReference>
<dbReference type="PROSITE" id="PS00914">
    <property type="entry name" value="SYNTAXIN"/>
    <property type="match status" value="1"/>
</dbReference>
<dbReference type="PROSITE" id="PS50192">
    <property type="entry name" value="T_SNARE"/>
    <property type="match status" value="1"/>
</dbReference>
<sequence>MNDLFSNSFKKNQAQLGDVEAGQETMNLDKFFEDVENVKDDMKGVEALYKKLQDSNEECKTVHNAKKVKELRAKMDGDVAMVLKRVKIIKQKLEALEKANANSRNVPGCGPGSSTDRTRSSVVSGLGKKLKDLMDSFQGLRARMNNEYKETVERRYFTITGEKADEQTIDNLIASGESENFLQKAIQEQGRGQILDTISEIQERHDAVKEIEKNLLELHQVFLDMAALVEAQGQQLNNIESHVAKASSFVRRGTDQLQDAREYQKSSRKWTCYAIILFIVIFILLLIPLLPHIMLMLK</sequence>
<keyword id="KW-0007">Acetylation</keyword>
<keyword id="KW-0175">Coiled coil</keyword>
<keyword id="KW-0472">Membrane</keyword>
<keyword id="KW-0653">Protein transport</keyword>
<keyword id="KW-1185">Reference proteome</keyword>
<keyword id="KW-0812">Transmembrane</keyword>
<keyword id="KW-1133">Transmembrane helix</keyword>
<keyword id="KW-0813">Transport</keyword>
<protein>
    <recommendedName>
        <fullName>Syntaxin-125</fullName>
        <shortName>AtSYP125</shortName>
    </recommendedName>
</protein>
<gene>
    <name type="primary">SYP125</name>
    <name type="ordered locus">At1g11250</name>
    <name type="ORF">T28P6.10</name>
</gene>
<name>SY125_ARATH</name>
<comment type="function">
    <text evidence="1">Vesicle trafficking protein that functions in the secretory pathway.</text>
</comment>
<comment type="subunit">
    <text evidence="1">Part of the t-SNARE complex.</text>
</comment>
<comment type="subcellular location">
    <subcellularLocation>
        <location evidence="1">Membrane</location>
        <topology evidence="1">Single-pass type IV membrane protein</topology>
    </subcellularLocation>
</comment>
<comment type="similarity">
    <text evidence="5">Belongs to the syntaxin family.</text>
</comment>
<accession>Q9SXB0</accession>
<accession>Q4PT35</accession>
<proteinExistence type="evidence at transcript level"/>
<evidence type="ECO:0000250" key="1"/>
<evidence type="ECO:0000250" key="2">
    <source>
        <dbReference type="UniProtKB" id="Q9SVC2"/>
    </source>
</evidence>
<evidence type="ECO:0000255" key="3"/>
<evidence type="ECO:0000255" key="4">
    <source>
        <dbReference type="PROSITE-ProRule" id="PRU00202"/>
    </source>
</evidence>
<evidence type="ECO:0000305" key="5"/>
<reference key="1">
    <citation type="journal article" date="2000" name="Nature">
        <title>Sequence and analysis of chromosome 1 of the plant Arabidopsis thaliana.</title>
        <authorList>
            <person name="Theologis A."/>
            <person name="Ecker J.R."/>
            <person name="Palm C.J."/>
            <person name="Federspiel N.A."/>
            <person name="Kaul S."/>
            <person name="White O."/>
            <person name="Alonso J."/>
            <person name="Altafi H."/>
            <person name="Araujo R."/>
            <person name="Bowman C.L."/>
            <person name="Brooks S.Y."/>
            <person name="Buehler E."/>
            <person name="Chan A."/>
            <person name="Chao Q."/>
            <person name="Chen H."/>
            <person name="Cheuk R.F."/>
            <person name="Chin C.W."/>
            <person name="Chung M.K."/>
            <person name="Conn L."/>
            <person name="Conway A.B."/>
            <person name="Conway A.R."/>
            <person name="Creasy T.H."/>
            <person name="Dewar K."/>
            <person name="Dunn P."/>
            <person name="Etgu P."/>
            <person name="Feldblyum T.V."/>
            <person name="Feng J.-D."/>
            <person name="Fong B."/>
            <person name="Fujii C.Y."/>
            <person name="Gill J.E."/>
            <person name="Goldsmith A.D."/>
            <person name="Haas B."/>
            <person name="Hansen N.F."/>
            <person name="Hughes B."/>
            <person name="Huizar L."/>
            <person name="Hunter J.L."/>
            <person name="Jenkins J."/>
            <person name="Johnson-Hopson C."/>
            <person name="Khan S."/>
            <person name="Khaykin E."/>
            <person name="Kim C.J."/>
            <person name="Koo H.L."/>
            <person name="Kremenetskaia I."/>
            <person name="Kurtz D.B."/>
            <person name="Kwan A."/>
            <person name="Lam B."/>
            <person name="Langin-Hooper S."/>
            <person name="Lee A."/>
            <person name="Lee J.M."/>
            <person name="Lenz C.A."/>
            <person name="Li J.H."/>
            <person name="Li Y.-P."/>
            <person name="Lin X."/>
            <person name="Liu S.X."/>
            <person name="Liu Z.A."/>
            <person name="Luros J.S."/>
            <person name="Maiti R."/>
            <person name="Marziali A."/>
            <person name="Militscher J."/>
            <person name="Miranda M."/>
            <person name="Nguyen M."/>
            <person name="Nierman W.C."/>
            <person name="Osborne B.I."/>
            <person name="Pai G."/>
            <person name="Peterson J."/>
            <person name="Pham P.K."/>
            <person name="Rizzo M."/>
            <person name="Rooney T."/>
            <person name="Rowley D."/>
            <person name="Sakano H."/>
            <person name="Salzberg S.L."/>
            <person name="Schwartz J.R."/>
            <person name="Shinn P."/>
            <person name="Southwick A.M."/>
            <person name="Sun H."/>
            <person name="Tallon L.J."/>
            <person name="Tambunga G."/>
            <person name="Toriumi M.J."/>
            <person name="Town C.D."/>
            <person name="Utterback T."/>
            <person name="Van Aken S."/>
            <person name="Vaysberg M."/>
            <person name="Vysotskaia V.S."/>
            <person name="Walker M."/>
            <person name="Wu D."/>
            <person name="Yu G."/>
            <person name="Fraser C.M."/>
            <person name="Venter J.C."/>
            <person name="Davis R.W."/>
        </authorList>
    </citation>
    <scope>NUCLEOTIDE SEQUENCE [LARGE SCALE GENOMIC DNA]</scope>
    <source>
        <strain>cv. Columbia</strain>
    </source>
</reference>
<reference key="2">
    <citation type="journal article" date="2017" name="Plant J.">
        <title>Araport11: a complete reannotation of the Arabidopsis thaliana reference genome.</title>
        <authorList>
            <person name="Cheng C.Y."/>
            <person name="Krishnakumar V."/>
            <person name="Chan A.P."/>
            <person name="Thibaud-Nissen F."/>
            <person name="Schobel S."/>
            <person name="Town C.D."/>
        </authorList>
    </citation>
    <scope>GENOME REANNOTATION</scope>
    <source>
        <strain>cv. Columbia</strain>
    </source>
</reference>
<reference key="3">
    <citation type="submission" date="2005-05" db="EMBL/GenBank/DDBJ databases">
        <authorList>
            <person name="Underwood B.A."/>
            <person name="Xiao Y.-L."/>
            <person name="Moskal W.A. Jr."/>
            <person name="Monaghan E.L."/>
            <person name="Wang W."/>
            <person name="Redman J.C."/>
            <person name="Wu H.C."/>
            <person name="Utterback T."/>
            <person name="Town C.D."/>
        </authorList>
    </citation>
    <scope>NUCLEOTIDE SEQUENCE [LARGE SCALE MRNA]</scope>
    <source>
        <strain>cv. Columbia</strain>
    </source>
</reference>
<feature type="chain" id="PRO_0000210250" description="Syntaxin-125">
    <location>
        <begin position="1"/>
        <end position="298"/>
    </location>
</feature>
<feature type="topological domain" description="Cytoplasmic" evidence="3">
    <location>
        <begin position="1"/>
        <end position="274"/>
    </location>
</feature>
<feature type="transmembrane region" description="Helical; Anchor for type IV membrane protein" evidence="3">
    <location>
        <begin position="275"/>
        <end position="295"/>
    </location>
</feature>
<feature type="topological domain" description="Vesicular" evidence="3">
    <location>
        <begin position="296"/>
        <end position="298"/>
    </location>
</feature>
<feature type="domain" description="t-SNARE coiled-coil homology" evidence="4">
    <location>
        <begin position="198"/>
        <end position="260"/>
    </location>
</feature>
<feature type="coiled-coil region" evidence="3">
    <location>
        <begin position="25"/>
        <end position="155"/>
    </location>
</feature>
<feature type="modified residue" description="N-acetylmethionine" evidence="2">
    <location>
        <position position="1"/>
    </location>
</feature>